<feature type="chain" id="PRO_1000083923" description="Acetyl-coenzyme A carboxylase carboxyl transferase subunit alpha">
    <location>
        <begin position="1"/>
        <end position="316"/>
    </location>
</feature>
<feature type="domain" description="CoA carboxyltransferase C-terminal" evidence="2">
    <location>
        <begin position="39"/>
        <end position="293"/>
    </location>
</feature>
<comment type="function">
    <text evidence="1">Component of the acetyl coenzyme A carboxylase (ACC) complex. First, biotin carboxylase catalyzes the carboxylation of biotin on its carrier protein (BCCP) and then the CO(2) group is transferred by the carboxyltransferase to acetyl-CoA to form malonyl-CoA.</text>
</comment>
<comment type="catalytic activity">
    <reaction evidence="1">
        <text>N(6)-carboxybiotinyl-L-lysyl-[protein] + acetyl-CoA = N(6)-biotinyl-L-lysyl-[protein] + malonyl-CoA</text>
        <dbReference type="Rhea" id="RHEA:54728"/>
        <dbReference type="Rhea" id="RHEA-COMP:10505"/>
        <dbReference type="Rhea" id="RHEA-COMP:10506"/>
        <dbReference type="ChEBI" id="CHEBI:57288"/>
        <dbReference type="ChEBI" id="CHEBI:57384"/>
        <dbReference type="ChEBI" id="CHEBI:83144"/>
        <dbReference type="ChEBI" id="CHEBI:83145"/>
        <dbReference type="EC" id="2.1.3.15"/>
    </reaction>
</comment>
<comment type="pathway">
    <text evidence="1">Lipid metabolism; malonyl-CoA biosynthesis; malonyl-CoA from acetyl-CoA: step 1/1.</text>
</comment>
<comment type="subunit">
    <text evidence="1">Acetyl-CoA carboxylase is a heterohexamer composed of biotin carboxyl carrier protein (AccB), biotin carboxylase (AccC) and two subunits each of ACCase subunit alpha (AccA) and ACCase subunit beta (AccD).</text>
</comment>
<comment type="subcellular location">
    <subcellularLocation>
        <location evidence="1">Cytoplasm</location>
    </subcellularLocation>
</comment>
<comment type="similarity">
    <text evidence="1">Belongs to the AccA family.</text>
</comment>
<name>ACCA_COXBN</name>
<sequence>MNLDYLDFEQPIAELQAKIDELRRVGTSQEINLTEEVNKLEEKNAQLTRQIFSNLTAQQIVQLARHPLRPYTLDYIQRIFTDFNELHGDRHYSQASAIIGGLARLNGEPVMVIGHQKGRTTQEKIYRNFGMARPEGFRKALRLMKLAERFSIPVITLIDTPGAYPGIGAEERNQSEAIARNLFEMAQLKIPIICTIIGEGCSGGALAIGVGDRTLMLQYAYYSVISPEGCASILWKSAEKAGEAAEALGLTANRLHELGLIDEIIKEPLGGAHRDTDAMAEKLKKHLQANLTNLQAKSANDLLEERYRRWLSYGKD</sequence>
<reference key="1">
    <citation type="journal article" date="2009" name="Infect. Immun.">
        <title>Comparative genomics reveal extensive transposon-mediated genomic plasticity and diversity among potential effector proteins within the genus Coxiella.</title>
        <authorList>
            <person name="Beare P.A."/>
            <person name="Unsworth N."/>
            <person name="Andoh M."/>
            <person name="Voth D.E."/>
            <person name="Omsland A."/>
            <person name="Gilk S.D."/>
            <person name="Williams K.P."/>
            <person name="Sobral B.W."/>
            <person name="Kupko J.J. III"/>
            <person name="Porcella S.F."/>
            <person name="Samuel J.E."/>
            <person name="Heinzen R.A."/>
        </authorList>
    </citation>
    <scope>NUCLEOTIDE SEQUENCE [LARGE SCALE GENOMIC DNA]</scope>
    <source>
        <strain>Dugway 5J108-111</strain>
    </source>
</reference>
<keyword id="KW-0067">ATP-binding</keyword>
<keyword id="KW-0963">Cytoplasm</keyword>
<keyword id="KW-0275">Fatty acid biosynthesis</keyword>
<keyword id="KW-0276">Fatty acid metabolism</keyword>
<keyword id="KW-0444">Lipid biosynthesis</keyword>
<keyword id="KW-0443">Lipid metabolism</keyword>
<keyword id="KW-0547">Nucleotide-binding</keyword>
<keyword id="KW-0808">Transferase</keyword>
<evidence type="ECO:0000255" key="1">
    <source>
        <dbReference type="HAMAP-Rule" id="MF_00823"/>
    </source>
</evidence>
<evidence type="ECO:0000255" key="2">
    <source>
        <dbReference type="PROSITE-ProRule" id="PRU01137"/>
    </source>
</evidence>
<dbReference type="EC" id="2.1.3.15" evidence="1"/>
<dbReference type="EMBL" id="CP000733">
    <property type="protein sequence ID" value="ABS76843.1"/>
    <property type="molecule type" value="Genomic_DNA"/>
</dbReference>
<dbReference type="RefSeq" id="WP_005772042.1">
    <property type="nucleotide sequence ID" value="NC_009727.1"/>
</dbReference>
<dbReference type="SMR" id="A9KF93"/>
<dbReference type="KEGG" id="cbd:CBUD_0474"/>
<dbReference type="HOGENOM" id="CLU_015486_0_2_6"/>
<dbReference type="UniPathway" id="UPA00655">
    <property type="reaction ID" value="UER00711"/>
</dbReference>
<dbReference type="Proteomes" id="UP000008555">
    <property type="component" value="Chromosome"/>
</dbReference>
<dbReference type="GO" id="GO:0009317">
    <property type="term" value="C:acetyl-CoA carboxylase complex"/>
    <property type="evidence" value="ECO:0007669"/>
    <property type="project" value="InterPro"/>
</dbReference>
<dbReference type="GO" id="GO:0003989">
    <property type="term" value="F:acetyl-CoA carboxylase activity"/>
    <property type="evidence" value="ECO:0007669"/>
    <property type="project" value="InterPro"/>
</dbReference>
<dbReference type="GO" id="GO:0005524">
    <property type="term" value="F:ATP binding"/>
    <property type="evidence" value="ECO:0007669"/>
    <property type="project" value="UniProtKB-KW"/>
</dbReference>
<dbReference type="GO" id="GO:0016743">
    <property type="term" value="F:carboxyl- or carbamoyltransferase activity"/>
    <property type="evidence" value="ECO:0007669"/>
    <property type="project" value="UniProtKB-UniRule"/>
</dbReference>
<dbReference type="GO" id="GO:0006633">
    <property type="term" value="P:fatty acid biosynthetic process"/>
    <property type="evidence" value="ECO:0007669"/>
    <property type="project" value="UniProtKB-KW"/>
</dbReference>
<dbReference type="GO" id="GO:2001295">
    <property type="term" value="P:malonyl-CoA biosynthetic process"/>
    <property type="evidence" value="ECO:0007669"/>
    <property type="project" value="UniProtKB-UniRule"/>
</dbReference>
<dbReference type="Gene3D" id="3.90.226.10">
    <property type="entry name" value="2-enoyl-CoA Hydratase, Chain A, domain 1"/>
    <property type="match status" value="1"/>
</dbReference>
<dbReference type="HAMAP" id="MF_00823">
    <property type="entry name" value="AcetylCoA_CT_alpha"/>
    <property type="match status" value="1"/>
</dbReference>
<dbReference type="InterPro" id="IPR001095">
    <property type="entry name" value="Acetyl_CoA_COase_a_su"/>
</dbReference>
<dbReference type="InterPro" id="IPR029045">
    <property type="entry name" value="ClpP/crotonase-like_dom_sf"/>
</dbReference>
<dbReference type="InterPro" id="IPR011763">
    <property type="entry name" value="COA_CT_C"/>
</dbReference>
<dbReference type="NCBIfam" id="TIGR00513">
    <property type="entry name" value="accA"/>
    <property type="match status" value="1"/>
</dbReference>
<dbReference type="NCBIfam" id="NF041504">
    <property type="entry name" value="AccA_sub"/>
    <property type="match status" value="1"/>
</dbReference>
<dbReference type="NCBIfam" id="NF004344">
    <property type="entry name" value="PRK05724.1"/>
    <property type="match status" value="1"/>
</dbReference>
<dbReference type="PANTHER" id="PTHR42853">
    <property type="entry name" value="ACETYL-COENZYME A CARBOXYLASE CARBOXYL TRANSFERASE SUBUNIT ALPHA"/>
    <property type="match status" value="1"/>
</dbReference>
<dbReference type="PANTHER" id="PTHR42853:SF3">
    <property type="entry name" value="ACETYL-COENZYME A CARBOXYLASE CARBOXYL TRANSFERASE SUBUNIT ALPHA, CHLOROPLASTIC"/>
    <property type="match status" value="1"/>
</dbReference>
<dbReference type="Pfam" id="PF03255">
    <property type="entry name" value="ACCA"/>
    <property type="match status" value="1"/>
</dbReference>
<dbReference type="PRINTS" id="PR01069">
    <property type="entry name" value="ACCCTRFRASEA"/>
</dbReference>
<dbReference type="SUPFAM" id="SSF52096">
    <property type="entry name" value="ClpP/crotonase"/>
    <property type="match status" value="1"/>
</dbReference>
<dbReference type="PROSITE" id="PS50989">
    <property type="entry name" value="COA_CT_CTER"/>
    <property type="match status" value="1"/>
</dbReference>
<organism>
    <name type="scientific">Coxiella burnetii (strain Dugway 5J108-111)</name>
    <dbReference type="NCBI Taxonomy" id="434922"/>
    <lineage>
        <taxon>Bacteria</taxon>
        <taxon>Pseudomonadati</taxon>
        <taxon>Pseudomonadota</taxon>
        <taxon>Gammaproteobacteria</taxon>
        <taxon>Legionellales</taxon>
        <taxon>Coxiellaceae</taxon>
        <taxon>Coxiella</taxon>
    </lineage>
</organism>
<gene>
    <name evidence="1" type="primary">accA</name>
    <name type="ordered locus">CBUD_0474</name>
</gene>
<proteinExistence type="inferred from homology"/>
<accession>A9KF93</accession>
<protein>
    <recommendedName>
        <fullName evidence="1">Acetyl-coenzyme A carboxylase carboxyl transferase subunit alpha</fullName>
        <shortName evidence="1">ACCase subunit alpha</shortName>
        <shortName evidence="1">Acetyl-CoA carboxylase carboxyltransferase subunit alpha</shortName>
        <ecNumber evidence="1">2.1.3.15</ecNumber>
    </recommendedName>
</protein>